<reference key="1">
    <citation type="submission" date="2008-06" db="EMBL/GenBank/DDBJ databases">
        <title>Complete sequence of Chlorobium phaeobacteroides BS1.</title>
        <authorList>
            <consortium name="US DOE Joint Genome Institute"/>
            <person name="Lucas S."/>
            <person name="Copeland A."/>
            <person name="Lapidus A."/>
            <person name="Glavina del Rio T."/>
            <person name="Dalin E."/>
            <person name="Tice H."/>
            <person name="Bruce D."/>
            <person name="Goodwin L."/>
            <person name="Pitluck S."/>
            <person name="Schmutz J."/>
            <person name="Larimer F."/>
            <person name="Land M."/>
            <person name="Hauser L."/>
            <person name="Kyrpides N."/>
            <person name="Ovchinnikova G."/>
            <person name="Li T."/>
            <person name="Liu Z."/>
            <person name="Zhao F."/>
            <person name="Overmann J."/>
            <person name="Bryant D.A."/>
            <person name="Richardson P."/>
        </authorList>
    </citation>
    <scope>NUCLEOTIDE SEQUENCE [LARGE SCALE GENOMIC DNA]</scope>
    <source>
        <strain>BS1</strain>
    </source>
</reference>
<accession>B3ELN9</accession>
<comment type="function">
    <text evidence="1">One of several proteins that assist in the late maturation steps of the functional core of the 30S ribosomal subunit. Associates with free 30S ribosomal subunits (but not with 30S subunits that are part of 70S ribosomes or polysomes). Required for efficient processing of 16S rRNA. May interact with the 5'-terminal helix region of 16S rRNA.</text>
</comment>
<comment type="subunit">
    <text evidence="1">Monomer. Binds 30S ribosomal subunits, but not 50S ribosomal subunits or 70S ribosomes.</text>
</comment>
<comment type="subcellular location">
    <subcellularLocation>
        <location evidence="1">Cytoplasm</location>
    </subcellularLocation>
</comment>
<comment type="similarity">
    <text evidence="1">Belongs to the RbfA family.</text>
</comment>
<keyword id="KW-0963">Cytoplasm</keyword>
<keyword id="KW-0690">Ribosome biogenesis</keyword>
<protein>
    <recommendedName>
        <fullName evidence="1">Ribosome-binding factor A</fullName>
    </recommendedName>
</protein>
<dbReference type="EMBL" id="CP001101">
    <property type="protein sequence ID" value="ACE03368.1"/>
    <property type="molecule type" value="Genomic_DNA"/>
</dbReference>
<dbReference type="SMR" id="B3ELN9"/>
<dbReference type="STRING" id="331678.Cphamn1_0403"/>
<dbReference type="KEGG" id="cpb:Cphamn1_0403"/>
<dbReference type="eggNOG" id="COG0858">
    <property type="taxonomic scope" value="Bacteria"/>
</dbReference>
<dbReference type="HOGENOM" id="CLU_089475_4_0_10"/>
<dbReference type="OrthoDB" id="9811910at2"/>
<dbReference type="GO" id="GO:0005829">
    <property type="term" value="C:cytosol"/>
    <property type="evidence" value="ECO:0007669"/>
    <property type="project" value="TreeGrafter"/>
</dbReference>
<dbReference type="GO" id="GO:0043024">
    <property type="term" value="F:ribosomal small subunit binding"/>
    <property type="evidence" value="ECO:0007669"/>
    <property type="project" value="TreeGrafter"/>
</dbReference>
<dbReference type="GO" id="GO:0030490">
    <property type="term" value="P:maturation of SSU-rRNA"/>
    <property type="evidence" value="ECO:0007669"/>
    <property type="project" value="UniProtKB-UniRule"/>
</dbReference>
<dbReference type="Gene3D" id="3.30.300.20">
    <property type="match status" value="1"/>
</dbReference>
<dbReference type="HAMAP" id="MF_00003">
    <property type="entry name" value="RbfA"/>
    <property type="match status" value="1"/>
</dbReference>
<dbReference type="InterPro" id="IPR015946">
    <property type="entry name" value="KH_dom-like_a/b"/>
</dbReference>
<dbReference type="InterPro" id="IPR000238">
    <property type="entry name" value="RbfA"/>
</dbReference>
<dbReference type="InterPro" id="IPR023799">
    <property type="entry name" value="RbfA_dom_sf"/>
</dbReference>
<dbReference type="NCBIfam" id="TIGR00082">
    <property type="entry name" value="rbfA"/>
    <property type="match status" value="1"/>
</dbReference>
<dbReference type="PANTHER" id="PTHR33515">
    <property type="entry name" value="RIBOSOME-BINDING FACTOR A, CHLOROPLASTIC-RELATED"/>
    <property type="match status" value="1"/>
</dbReference>
<dbReference type="PANTHER" id="PTHR33515:SF1">
    <property type="entry name" value="RIBOSOME-BINDING FACTOR A, CHLOROPLASTIC-RELATED"/>
    <property type="match status" value="1"/>
</dbReference>
<dbReference type="Pfam" id="PF02033">
    <property type="entry name" value="RBFA"/>
    <property type="match status" value="1"/>
</dbReference>
<dbReference type="SUPFAM" id="SSF89919">
    <property type="entry name" value="Ribosome-binding factor A, RbfA"/>
    <property type="match status" value="1"/>
</dbReference>
<gene>
    <name evidence="1" type="primary">rbfA</name>
    <name type="ordered locus">Cphamn1_0403</name>
</gene>
<feature type="chain" id="PRO_1000088870" description="Ribosome-binding factor A">
    <location>
        <begin position="1"/>
        <end position="116"/>
    </location>
</feature>
<proteinExistence type="inferred from homology"/>
<organism>
    <name type="scientific">Chlorobium phaeobacteroides (strain BS1)</name>
    <dbReference type="NCBI Taxonomy" id="331678"/>
    <lineage>
        <taxon>Bacteria</taxon>
        <taxon>Pseudomonadati</taxon>
        <taxon>Chlorobiota</taxon>
        <taxon>Chlorobiia</taxon>
        <taxon>Chlorobiales</taxon>
        <taxon>Chlorobiaceae</taxon>
        <taxon>Chlorobium/Pelodictyon group</taxon>
        <taxon>Chlorobium</taxon>
    </lineage>
</organism>
<evidence type="ECO:0000255" key="1">
    <source>
        <dbReference type="HAMAP-Rule" id="MF_00003"/>
    </source>
</evidence>
<sequence>MTIRTEKVASLLQKELSAIFEKELPRSGPLMTVVQVKVTTDLGIARVYVSIIGSEKERKTAIAHLQNETRYIRKLLSAKIRHQFRRIPELEFYEDRLYEKAERIDLLIKQALGTSK</sequence>
<name>RBFA_CHLPB</name>